<gene>
    <name evidence="1" type="primary">priB</name>
    <name type="ordered locus">BP2795</name>
</gene>
<keyword id="KW-0002">3D-structure</keyword>
<keyword id="KW-0235">DNA replication</keyword>
<keyword id="KW-0238">DNA-binding</keyword>
<keyword id="KW-0639">Primosome</keyword>
<keyword id="KW-1185">Reference proteome</keyword>
<comment type="function">
    <text evidence="1">Involved in the restart of stalled replication forks, which reloads the replicative helicase on sites other than the origin of replication; the PriA-PriB pathway is the major replication restart pathway. During primosome assembly it facilitates complex formation between PriA and DnaT on DNA; stabilizes PriA on DNA. Stimulates the DNA unwinding activity of PriA helicase.</text>
</comment>
<comment type="subunit">
    <text evidence="1">Homodimer. Interacts with PriA and DnaT. Component of the replication restart primosome. Primosome assembly occurs via a 'hand-off' mechanism. PriA binds to replication forks, subsequently PriB then DnaT bind; DnaT then displaces ssDNA to generate the helicase loading substrate.</text>
</comment>
<comment type="similarity">
    <text evidence="1">Belongs to the PriB family.</text>
</comment>
<dbReference type="EMBL" id="BX640419">
    <property type="protein sequence ID" value="CAE43068.1"/>
    <property type="molecule type" value="Genomic_DNA"/>
</dbReference>
<dbReference type="RefSeq" id="NP_881395.1">
    <property type="nucleotide sequence ID" value="NC_002929.2"/>
</dbReference>
<dbReference type="RefSeq" id="WP_003813095.1">
    <property type="nucleotide sequence ID" value="NZ_CP039022.1"/>
</dbReference>
<dbReference type="PDB" id="3KLW">
    <property type="method" value="X-ray"/>
    <property type="resolution" value="2.00 A"/>
    <property type="chains" value="A/B=1-98"/>
</dbReference>
<dbReference type="PDBsum" id="3KLW"/>
<dbReference type="SMR" id="P67673"/>
<dbReference type="STRING" id="257313.BP2795"/>
<dbReference type="PaxDb" id="257313-BP2795"/>
<dbReference type="GeneID" id="93204251"/>
<dbReference type="KEGG" id="bpe:BP2795"/>
<dbReference type="PATRIC" id="fig|257313.5.peg.3015"/>
<dbReference type="eggNOG" id="COG2965">
    <property type="taxonomic scope" value="Bacteria"/>
</dbReference>
<dbReference type="HOGENOM" id="CLU_166075_1_2_4"/>
<dbReference type="EvolutionaryTrace" id="P67673"/>
<dbReference type="Proteomes" id="UP000002676">
    <property type="component" value="Chromosome"/>
</dbReference>
<dbReference type="GO" id="GO:1990077">
    <property type="term" value="C:primosome complex"/>
    <property type="evidence" value="ECO:0007669"/>
    <property type="project" value="UniProtKB-KW"/>
</dbReference>
<dbReference type="GO" id="GO:0003697">
    <property type="term" value="F:single-stranded DNA binding"/>
    <property type="evidence" value="ECO:0007669"/>
    <property type="project" value="UniProtKB-UniRule"/>
</dbReference>
<dbReference type="GO" id="GO:0006269">
    <property type="term" value="P:DNA replication, synthesis of primer"/>
    <property type="evidence" value="ECO:0007669"/>
    <property type="project" value="UniProtKB-KW"/>
</dbReference>
<dbReference type="Gene3D" id="2.40.50.140">
    <property type="entry name" value="Nucleic acid-binding proteins"/>
    <property type="match status" value="1"/>
</dbReference>
<dbReference type="HAMAP" id="MF_00720">
    <property type="entry name" value="PriB"/>
    <property type="match status" value="1"/>
</dbReference>
<dbReference type="InterPro" id="IPR012340">
    <property type="entry name" value="NA-bd_OB-fold"/>
</dbReference>
<dbReference type="InterPro" id="IPR000424">
    <property type="entry name" value="Primosome_PriB/ssb"/>
</dbReference>
<dbReference type="InterPro" id="IPR023646">
    <property type="entry name" value="Prisomal_replication_PriB"/>
</dbReference>
<dbReference type="NCBIfam" id="TIGR04418">
    <property type="entry name" value="PriB_gamma"/>
    <property type="match status" value="1"/>
</dbReference>
<dbReference type="Pfam" id="PF22657">
    <property type="entry name" value="SSB_1"/>
    <property type="match status" value="1"/>
</dbReference>
<dbReference type="PIRSF" id="PIRSF003135">
    <property type="entry name" value="Primosomal_n"/>
    <property type="match status" value="1"/>
</dbReference>
<dbReference type="SUPFAM" id="SSF50249">
    <property type="entry name" value="Nucleic acid-binding proteins"/>
    <property type="match status" value="1"/>
</dbReference>
<dbReference type="PROSITE" id="PS50935">
    <property type="entry name" value="SSB"/>
    <property type="match status" value="1"/>
</dbReference>
<accession>P67673</accession>
<accession>Q7VV90</accession>
<accession>Q7W7P7</accession>
<accession>Q7WL34</accession>
<sequence>MNTLELSARVLECGAMRHTPAGLPALELLLVHESEVVEAGHPRRVELTISAVALGDLALLLADTPLGTEMQVQGFLAPARKDSVKVKLHLQQARRIAGSMGRDPLVG</sequence>
<organism>
    <name type="scientific">Bordetella pertussis (strain Tohama I / ATCC BAA-589 / NCTC 13251)</name>
    <dbReference type="NCBI Taxonomy" id="257313"/>
    <lineage>
        <taxon>Bacteria</taxon>
        <taxon>Pseudomonadati</taxon>
        <taxon>Pseudomonadota</taxon>
        <taxon>Betaproteobacteria</taxon>
        <taxon>Burkholderiales</taxon>
        <taxon>Alcaligenaceae</taxon>
        <taxon>Bordetella</taxon>
    </lineage>
</organism>
<feature type="chain" id="PRO_0000199047" description="Replication restart protein PriB">
    <location>
        <begin position="1"/>
        <end position="107"/>
    </location>
</feature>
<feature type="domain" description="SSB" evidence="1">
    <location>
        <begin position="1"/>
        <end position="97"/>
    </location>
</feature>
<feature type="strand" evidence="3">
    <location>
        <begin position="2"/>
        <end position="13"/>
    </location>
</feature>
<feature type="strand" evidence="3">
    <location>
        <begin position="24"/>
        <end position="38"/>
    </location>
</feature>
<feature type="strand" evidence="3">
    <location>
        <begin position="41"/>
        <end position="54"/>
    </location>
</feature>
<feature type="helix" evidence="3">
    <location>
        <begin position="56"/>
        <end position="61"/>
    </location>
</feature>
<feature type="strand" evidence="3">
    <location>
        <begin position="69"/>
        <end position="80"/>
    </location>
</feature>
<feature type="strand" evidence="3">
    <location>
        <begin position="86"/>
        <end position="96"/>
    </location>
</feature>
<evidence type="ECO:0000255" key="1">
    <source>
        <dbReference type="HAMAP-Rule" id="MF_00720"/>
    </source>
</evidence>
<evidence type="ECO:0007744" key="2">
    <source>
        <dbReference type="PDB" id="3KLW"/>
    </source>
</evidence>
<evidence type="ECO:0007829" key="3">
    <source>
        <dbReference type="PDB" id="3KLW"/>
    </source>
</evidence>
<reference key="1">
    <citation type="journal article" date="2003" name="Nat. Genet.">
        <title>Comparative analysis of the genome sequences of Bordetella pertussis, Bordetella parapertussis and Bordetella bronchiseptica.</title>
        <authorList>
            <person name="Parkhill J."/>
            <person name="Sebaihia M."/>
            <person name="Preston A."/>
            <person name="Murphy L.D."/>
            <person name="Thomson N.R."/>
            <person name="Harris D.E."/>
            <person name="Holden M.T.G."/>
            <person name="Churcher C.M."/>
            <person name="Bentley S.D."/>
            <person name="Mungall K.L."/>
            <person name="Cerdeno-Tarraga A.-M."/>
            <person name="Temple L."/>
            <person name="James K.D."/>
            <person name="Harris B."/>
            <person name="Quail M.A."/>
            <person name="Achtman M."/>
            <person name="Atkin R."/>
            <person name="Baker S."/>
            <person name="Basham D."/>
            <person name="Bason N."/>
            <person name="Cherevach I."/>
            <person name="Chillingworth T."/>
            <person name="Collins M."/>
            <person name="Cronin A."/>
            <person name="Davis P."/>
            <person name="Doggett J."/>
            <person name="Feltwell T."/>
            <person name="Goble A."/>
            <person name="Hamlin N."/>
            <person name="Hauser H."/>
            <person name="Holroyd S."/>
            <person name="Jagels K."/>
            <person name="Leather S."/>
            <person name="Moule S."/>
            <person name="Norberczak H."/>
            <person name="O'Neil S."/>
            <person name="Ormond D."/>
            <person name="Price C."/>
            <person name="Rabbinowitsch E."/>
            <person name="Rutter S."/>
            <person name="Sanders M."/>
            <person name="Saunders D."/>
            <person name="Seeger K."/>
            <person name="Sharp S."/>
            <person name="Simmonds M."/>
            <person name="Skelton J."/>
            <person name="Squares R."/>
            <person name="Squares S."/>
            <person name="Stevens K."/>
            <person name="Unwin L."/>
            <person name="Whitehead S."/>
            <person name="Barrell B.G."/>
            <person name="Maskell D.J."/>
        </authorList>
    </citation>
    <scope>NUCLEOTIDE SEQUENCE [LARGE SCALE GENOMIC DNA]</scope>
    <source>
        <strain>Tohama I / ATCC BAA-589 / NCTC 13251</strain>
    </source>
</reference>
<reference evidence="2" key="2">
    <citation type="submission" date="2009-11" db="PDB data bank">
        <title>Crystal structure of primosomal replication protein n from bordetella pertussis. Northeast structural genomics consortium target ber132.</title>
        <authorList>
            <person name="Kuzin A.P."/>
            <person name="Neely H."/>
            <person name="Vorobiev S.M."/>
            <person name="Seetharaman J."/>
            <person name="Forouhar F."/>
            <person name="Wang H."/>
            <person name="Janjua H."/>
            <person name="Maglaqui M."/>
            <person name="Xiao T."/>
            <person name="Liu J."/>
            <person name="Baran M.C."/>
            <person name="Acton T.B."/>
            <person name="Rost B."/>
            <person name="Montelione G.T."/>
            <person name="Hunt J.F."/>
        </authorList>
    </citation>
    <scope>X-RAY CRYSTALLOGRAPHY (2.00 ANGSTROMS) OF 1-98</scope>
</reference>
<protein>
    <recommendedName>
        <fullName evidence="1">Replication restart protein PriB</fullName>
    </recommendedName>
</protein>
<name>PRIB_BORPE</name>
<proteinExistence type="evidence at protein level"/>